<name>GLO2_MARMS</name>
<evidence type="ECO:0000255" key="1">
    <source>
        <dbReference type="HAMAP-Rule" id="MF_01374"/>
    </source>
</evidence>
<protein>
    <recommendedName>
        <fullName evidence="1">Hydroxyacylglutathione hydrolase</fullName>
        <ecNumber evidence="1">3.1.2.6</ecNumber>
    </recommendedName>
    <alternativeName>
        <fullName evidence="1">Glyoxalase II</fullName>
        <shortName evidence="1">Glx II</shortName>
    </alternativeName>
</protein>
<organism>
    <name type="scientific">Marinomonas sp. (strain MWYL1)</name>
    <dbReference type="NCBI Taxonomy" id="400668"/>
    <lineage>
        <taxon>Bacteria</taxon>
        <taxon>Pseudomonadati</taxon>
        <taxon>Pseudomonadota</taxon>
        <taxon>Gammaproteobacteria</taxon>
        <taxon>Oceanospirillales</taxon>
        <taxon>Oceanospirillaceae</taxon>
        <taxon>Marinomonas</taxon>
    </lineage>
</organism>
<sequence>MTIFPLPAFNDNYIWIIQDKDSSGIWAVDPGKADVVLNFCHEYQKTLTGILITHHHKDHTGGVAELKQHSNCPVYGPEHLTELVTHPVDDGDRILVFSKVFTVIATPGHTLDHLCYFSEQETPILLSGDTLFKGGCGRIMEGTHEQMLAAMIKISGLPNDTLIYGTHEYTLANYRFALSLEPNNKDLIESNITCQKLRTEEKPTLPTKLSIEKKTNPFLRSHIEALKIQAAQQLNEIPAENPIGAFSQVRRAKDSFS</sequence>
<feature type="chain" id="PRO_1000087283" description="Hydroxyacylglutathione hydrolase">
    <location>
        <begin position="1"/>
        <end position="257"/>
    </location>
</feature>
<feature type="binding site" evidence="1">
    <location>
        <position position="54"/>
    </location>
    <ligand>
        <name>Zn(2+)</name>
        <dbReference type="ChEBI" id="CHEBI:29105"/>
        <label>1</label>
    </ligand>
</feature>
<feature type="binding site" evidence="1">
    <location>
        <position position="56"/>
    </location>
    <ligand>
        <name>Zn(2+)</name>
        <dbReference type="ChEBI" id="CHEBI:29105"/>
        <label>1</label>
    </ligand>
</feature>
<feature type="binding site" evidence="1">
    <location>
        <position position="58"/>
    </location>
    <ligand>
        <name>Zn(2+)</name>
        <dbReference type="ChEBI" id="CHEBI:29105"/>
        <label>2</label>
    </ligand>
</feature>
<feature type="binding site" evidence="1">
    <location>
        <position position="59"/>
    </location>
    <ligand>
        <name>Zn(2+)</name>
        <dbReference type="ChEBI" id="CHEBI:29105"/>
        <label>2</label>
    </ligand>
</feature>
<feature type="binding site" evidence="1">
    <location>
        <position position="109"/>
    </location>
    <ligand>
        <name>Zn(2+)</name>
        <dbReference type="ChEBI" id="CHEBI:29105"/>
        <label>1</label>
    </ligand>
</feature>
<feature type="binding site" evidence="1">
    <location>
        <position position="129"/>
    </location>
    <ligand>
        <name>Zn(2+)</name>
        <dbReference type="ChEBI" id="CHEBI:29105"/>
        <label>1</label>
    </ligand>
</feature>
<feature type="binding site" evidence="1">
    <location>
        <position position="129"/>
    </location>
    <ligand>
        <name>Zn(2+)</name>
        <dbReference type="ChEBI" id="CHEBI:29105"/>
        <label>2</label>
    </ligand>
</feature>
<feature type="binding site" evidence="1">
    <location>
        <position position="167"/>
    </location>
    <ligand>
        <name>Zn(2+)</name>
        <dbReference type="ChEBI" id="CHEBI:29105"/>
        <label>2</label>
    </ligand>
</feature>
<dbReference type="EC" id="3.1.2.6" evidence="1"/>
<dbReference type="EMBL" id="CP000749">
    <property type="protein sequence ID" value="ABR70628.1"/>
    <property type="molecule type" value="Genomic_DNA"/>
</dbReference>
<dbReference type="SMR" id="A6VVZ9"/>
<dbReference type="STRING" id="400668.Mmwyl1_1702"/>
<dbReference type="KEGG" id="mmw:Mmwyl1_1702"/>
<dbReference type="eggNOG" id="COG0491">
    <property type="taxonomic scope" value="Bacteria"/>
</dbReference>
<dbReference type="HOGENOM" id="CLU_030571_4_1_6"/>
<dbReference type="OrthoDB" id="9802248at2"/>
<dbReference type="UniPathway" id="UPA00619">
    <property type="reaction ID" value="UER00676"/>
</dbReference>
<dbReference type="GO" id="GO:0004416">
    <property type="term" value="F:hydroxyacylglutathione hydrolase activity"/>
    <property type="evidence" value="ECO:0007669"/>
    <property type="project" value="UniProtKB-UniRule"/>
</dbReference>
<dbReference type="GO" id="GO:0046872">
    <property type="term" value="F:metal ion binding"/>
    <property type="evidence" value="ECO:0007669"/>
    <property type="project" value="UniProtKB-KW"/>
</dbReference>
<dbReference type="GO" id="GO:0019243">
    <property type="term" value="P:methylglyoxal catabolic process to D-lactate via S-lactoyl-glutathione"/>
    <property type="evidence" value="ECO:0007669"/>
    <property type="project" value="InterPro"/>
</dbReference>
<dbReference type="CDD" id="cd07723">
    <property type="entry name" value="hydroxyacylglutathione_hydrolase_MBL-fold"/>
    <property type="match status" value="1"/>
</dbReference>
<dbReference type="Gene3D" id="3.60.15.10">
    <property type="entry name" value="Ribonuclease Z/Hydroxyacylglutathione hydrolase-like"/>
    <property type="match status" value="1"/>
</dbReference>
<dbReference type="HAMAP" id="MF_01374">
    <property type="entry name" value="Glyoxalase_2"/>
    <property type="match status" value="1"/>
</dbReference>
<dbReference type="InterPro" id="IPR035680">
    <property type="entry name" value="Clx_II_MBL"/>
</dbReference>
<dbReference type="InterPro" id="IPR050110">
    <property type="entry name" value="Glyoxalase_II_hydrolase"/>
</dbReference>
<dbReference type="InterPro" id="IPR032282">
    <property type="entry name" value="HAGH_C"/>
</dbReference>
<dbReference type="InterPro" id="IPR017782">
    <property type="entry name" value="Hydroxyacylglutathione_Hdrlase"/>
</dbReference>
<dbReference type="InterPro" id="IPR001279">
    <property type="entry name" value="Metallo-B-lactamas"/>
</dbReference>
<dbReference type="InterPro" id="IPR036866">
    <property type="entry name" value="RibonucZ/Hydroxyglut_hydro"/>
</dbReference>
<dbReference type="NCBIfam" id="TIGR03413">
    <property type="entry name" value="GSH_gloB"/>
    <property type="match status" value="1"/>
</dbReference>
<dbReference type="PANTHER" id="PTHR43705">
    <property type="entry name" value="HYDROXYACYLGLUTATHIONE HYDROLASE"/>
    <property type="match status" value="1"/>
</dbReference>
<dbReference type="PANTHER" id="PTHR43705:SF1">
    <property type="entry name" value="HYDROXYACYLGLUTATHIONE HYDROLASE GLOB"/>
    <property type="match status" value="1"/>
</dbReference>
<dbReference type="Pfam" id="PF16123">
    <property type="entry name" value="HAGH_C"/>
    <property type="match status" value="1"/>
</dbReference>
<dbReference type="Pfam" id="PF00753">
    <property type="entry name" value="Lactamase_B"/>
    <property type="match status" value="1"/>
</dbReference>
<dbReference type="PIRSF" id="PIRSF005457">
    <property type="entry name" value="Glx"/>
    <property type="match status" value="1"/>
</dbReference>
<dbReference type="SMART" id="SM00849">
    <property type="entry name" value="Lactamase_B"/>
    <property type="match status" value="1"/>
</dbReference>
<dbReference type="SUPFAM" id="SSF56281">
    <property type="entry name" value="Metallo-hydrolase/oxidoreductase"/>
    <property type="match status" value="1"/>
</dbReference>
<comment type="function">
    <text evidence="1">Thiolesterase that catalyzes the hydrolysis of S-D-lactoyl-glutathione to form glutathione and D-lactic acid.</text>
</comment>
<comment type="catalytic activity">
    <reaction evidence="1">
        <text>an S-(2-hydroxyacyl)glutathione + H2O = a 2-hydroxy carboxylate + glutathione + H(+)</text>
        <dbReference type="Rhea" id="RHEA:21864"/>
        <dbReference type="ChEBI" id="CHEBI:15377"/>
        <dbReference type="ChEBI" id="CHEBI:15378"/>
        <dbReference type="ChEBI" id="CHEBI:57925"/>
        <dbReference type="ChEBI" id="CHEBI:58896"/>
        <dbReference type="ChEBI" id="CHEBI:71261"/>
        <dbReference type="EC" id="3.1.2.6"/>
    </reaction>
</comment>
<comment type="cofactor">
    <cofactor evidence="1">
        <name>Zn(2+)</name>
        <dbReference type="ChEBI" id="CHEBI:29105"/>
    </cofactor>
    <text evidence="1">Binds 2 Zn(2+) ions per subunit.</text>
</comment>
<comment type="pathway">
    <text evidence="1">Secondary metabolite metabolism; methylglyoxal degradation; (R)-lactate from methylglyoxal: step 2/2.</text>
</comment>
<comment type="subunit">
    <text evidence="1">Monomer.</text>
</comment>
<comment type="similarity">
    <text evidence="1">Belongs to the metallo-beta-lactamase superfamily. Glyoxalase II family.</text>
</comment>
<gene>
    <name evidence="1" type="primary">gloB</name>
    <name type="ordered locus">Mmwyl1_1702</name>
</gene>
<proteinExistence type="inferred from homology"/>
<keyword id="KW-0378">Hydrolase</keyword>
<keyword id="KW-0479">Metal-binding</keyword>
<keyword id="KW-0862">Zinc</keyword>
<accession>A6VVZ9</accession>
<reference key="1">
    <citation type="submission" date="2007-06" db="EMBL/GenBank/DDBJ databases">
        <title>Complete sequence of Marinomonas sp. MWYL1.</title>
        <authorList>
            <consortium name="US DOE Joint Genome Institute"/>
            <person name="Copeland A."/>
            <person name="Lucas S."/>
            <person name="Lapidus A."/>
            <person name="Barry K."/>
            <person name="Glavina del Rio T."/>
            <person name="Dalin E."/>
            <person name="Tice H."/>
            <person name="Pitluck S."/>
            <person name="Kiss H."/>
            <person name="Brettin T."/>
            <person name="Bruce D."/>
            <person name="Detter J.C."/>
            <person name="Han C."/>
            <person name="Schmutz J."/>
            <person name="Larimer F."/>
            <person name="Land M."/>
            <person name="Hauser L."/>
            <person name="Kyrpides N."/>
            <person name="Kim E."/>
            <person name="Johnston A.W.B."/>
            <person name="Todd J.D."/>
            <person name="Rogers R."/>
            <person name="Wexler M."/>
            <person name="Bond P.L."/>
            <person name="Li Y."/>
            <person name="Richardson P."/>
        </authorList>
    </citation>
    <scope>NUCLEOTIDE SEQUENCE [LARGE SCALE GENOMIC DNA]</scope>
    <source>
        <strain>MWYL1</strain>
    </source>
</reference>